<gene>
    <name evidence="1" type="primary">hisF</name>
    <name type="ordered locus">Rru_A3594</name>
</gene>
<name>HIS6_RHORT</name>
<evidence type="ECO:0000255" key="1">
    <source>
        <dbReference type="HAMAP-Rule" id="MF_01013"/>
    </source>
</evidence>
<keyword id="KW-0028">Amino-acid biosynthesis</keyword>
<keyword id="KW-0963">Cytoplasm</keyword>
<keyword id="KW-0368">Histidine biosynthesis</keyword>
<keyword id="KW-0456">Lyase</keyword>
<keyword id="KW-1185">Reference proteome</keyword>
<sequence length="252" mass="26596">MLKMRIIPCLDVKDGRVVKGVNFVGLRDAGDPVEQARLYDAAGADELCFLDITASHENRDTLLDVVGRTADQCFMPLTVGGGVRTTEDIRKLLLAGADKVSINTAAVTRPEFVREAAETFGAQCVVVALDAKSVGPGRFEIFTHGGRKATGLDAVDWAKRMVALGAGEILLTSMDRDGTRQGFNLPLTRAIADAVAVPVIASGGVGTLDHLVEGVRDGHATAVLAASIFHFGEYTIAQAKAHMAAAGLPMRL</sequence>
<comment type="function">
    <text evidence="1">IGPS catalyzes the conversion of PRFAR and glutamine to IGP, AICAR and glutamate. The HisF subunit catalyzes the cyclization activity that produces IGP and AICAR from PRFAR using the ammonia provided by the HisH subunit.</text>
</comment>
<comment type="catalytic activity">
    <reaction evidence="1">
        <text>5-[(5-phospho-1-deoxy-D-ribulos-1-ylimino)methylamino]-1-(5-phospho-beta-D-ribosyl)imidazole-4-carboxamide + L-glutamine = D-erythro-1-(imidazol-4-yl)glycerol 3-phosphate + 5-amino-1-(5-phospho-beta-D-ribosyl)imidazole-4-carboxamide + L-glutamate + H(+)</text>
        <dbReference type="Rhea" id="RHEA:24793"/>
        <dbReference type="ChEBI" id="CHEBI:15378"/>
        <dbReference type="ChEBI" id="CHEBI:29985"/>
        <dbReference type="ChEBI" id="CHEBI:58278"/>
        <dbReference type="ChEBI" id="CHEBI:58359"/>
        <dbReference type="ChEBI" id="CHEBI:58475"/>
        <dbReference type="ChEBI" id="CHEBI:58525"/>
        <dbReference type="EC" id="4.3.2.10"/>
    </reaction>
</comment>
<comment type="pathway">
    <text evidence="1">Amino-acid biosynthesis; L-histidine biosynthesis; L-histidine from 5-phospho-alpha-D-ribose 1-diphosphate: step 5/9.</text>
</comment>
<comment type="subunit">
    <text evidence="1">Heterodimer of HisH and HisF.</text>
</comment>
<comment type="subcellular location">
    <subcellularLocation>
        <location evidence="1">Cytoplasm</location>
    </subcellularLocation>
</comment>
<comment type="similarity">
    <text evidence="1">Belongs to the HisA/HisF family.</text>
</comment>
<reference key="1">
    <citation type="journal article" date="2011" name="Stand. Genomic Sci.">
        <title>Complete genome sequence of Rhodospirillum rubrum type strain (S1).</title>
        <authorList>
            <person name="Munk A.C."/>
            <person name="Copeland A."/>
            <person name="Lucas S."/>
            <person name="Lapidus A."/>
            <person name="Del Rio T.G."/>
            <person name="Barry K."/>
            <person name="Detter J.C."/>
            <person name="Hammon N."/>
            <person name="Israni S."/>
            <person name="Pitluck S."/>
            <person name="Brettin T."/>
            <person name="Bruce D."/>
            <person name="Han C."/>
            <person name="Tapia R."/>
            <person name="Gilna P."/>
            <person name="Schmutz J."/>
            <person name="Larimer F."/>
            <person name="Land M."/>
            <person name="Kyrpides N.C."/>
            <person name="Mavromatis K."/>
            <person name="Richardson P."/>
            <person name="Rohde M."/>
            <person name="Goeker M."/>
            <person name="Klenk H.P."/>
            <person name="Zhang Y."/>
            <person name="Roberts G.P."/>
            <person name="Reslewic S."/>
            <person name="Schwartz D.C."/>
        </authorList>
    </citation>
    <scope>NUCLEOTIDE SEQUENCE [LARGE SCALE GENOMIC DNA]</scope>
    <source>
        <strain>ATCC 11170 / ATH 1.1.1 / DSM 467 / LMG 4362 / NCIMB 8255 / S1</strain>
    </source>
</reference>
<feature type="chain" id="PRO_0000230134" description="Imidazole glycerol phosphate synthase subunit HisF">
    <location>
        <begin position="1"/>
        <end position="252"/>
    </location>
</feature>
<feature type="active site" evidence="1">
    <location>
        <position position="11"/>
    </location>
</feature>
<feature type="active site" evidence="1">
    <location>
        <position position="130"/>
    </location>
</feature>
<protein>
    <recommendedName>
        <fullName evidence="1">Imidazole glycerol phosphate synthase subunit HisF</fullName>
        <ecNumber evidence="1">4.3.2.10</ecNumber>
    </recommendedName>
    <alternativeName>
        <fullName evidence="1">IGP synthase cyclase subunit</fullName>
    </alternativeName>
    <alternativeName>
        <fullName evidence="1">IGP synthase subunit HisF</fullName>
    </alternativeName>
    <alternativeName>
        <fullName evidence="1">ImGP synthase subunit HisF</fullName>
        <shortName evidence="1">IGPS subunit HisF</shortName>
    </alternativeName>
</protein>
<proteinExistence type="inferred from homology"/>
<accession>Q2RNA7</accession>
<organism>
    <name type="scientific">Rhodospirillum rubrum (strain ATCC 11170 / ATH 1.1.1 / DSM 467 / LMG 4362 / NCIMB 8255 / S1)</name>
    <dbReference type="NCBI Taxonomy" id="269796"/>
    <lineage>
        <taxon>Bacteria</taxon>
        <taxon>Pseudomonadati</taxon>
        <taxon>Pseudomonadota</taxon>
        <taxon>Alphaproteobacteria</taxon>
        <taxon>Rhodospirillales</taxon>
        <taxon>Rhodospirillaceae</taxon>
        <taxon>Rhodospirillum</taxon>
    </lineage>
</organism>
<dbReference type="EC" id="4.3.2.10" evidence="1"/>
<dbReference type="EMBL" id="CP000230">
    <property type="protein sequence ID" value="ABC24388.1"/>
    <property type="molecule type" value="Genomic_DNA"/>
</dbReference>
<dbReference type="RefSeq" id="WP_011391341.1">
    <property type="nucleotide sequence ID" value="NC_007643.1"/>
</dbReference>
<dbReference type="RefSeq" id="YP_428675.1">
    <property type="nucleotide sequence ID" value="NC_007643.1"/>
</dbReference>
<dbReference type="SMR" id="Q2RNA7"/>
<dbReference type="STRING" id="269796.Rru_A3594"/>
<dbReference type="EnsemblBacteria" id="ABC24388">
    <property type="protein sequence ID" value="ABC24388"/>
    <property type="gene ID" value="Rru_A3594"/>
</dbReference>
<dbReference type="KEGG" id="rru:Rru_A3594"/>
<dbReference type="PATRIC" id="fig|269796.9.peg.3715"/>
<dbReference type="eggNOG" id="COG0107">
    <property type="taxonomic scope" value="Bacteria"/>
</dbReference>
<dbReference type="HOGENOM" id="CLU_048577_4_0_5"/>
<dbReference type="PhylomeDB" id="Q2RNA7"/>
<dbReference type="UniPathway" id="UPA00031">
    <property type="reaction ID" value="UER00010"/>
</dbReference>
<dbReference type="Proteomes" id="UP000001929">
    <property type="component" value="Chromosome"/>
</dbReference>
<dbReference type="GO" id="GO:0005737">
    <property type="term" value="C:cytoplasm"/>
    <property type="evidence" value="ECO:0007669"/>
    <property type="project" value="UniProtKB-SubCell"/>
</dbReference>
<dbReference type="GO" id="GO:0000107">
    <property type="term" value="F:imidazoleglycerol-phosphate synthase activity"/>
    <property type="evidence" value="ECO:0007669"/>
    <property type="project" value="UniProtKB-UniRule"/>
</dbReference>
<dbReference type="GO" id="GO:0016829">
    <property type="term" value="F:lyase activity"/>
    <property type="evidence" value="ECO:0007669"/>
    <property type="project" value="UniProtKB-KW"/>
</dbReference>
<dbReference type="GO" id="GO:0000105">
    <property type="term" value="P:L-histidine biosynthetic process"/>
    <property type="evidence" value="ECO:0007669"/>
    <property type="project" value="UniProtKB-UniRule"/>
</dbReference>
<dbReference type="CDD" id="cd04731">
    <property type="entry name" value="HisF"/>
    <property type="match status" value="1"/>
</dbReference>
<dbReference type="FunFam" id="3.20.20.70:FF:000006">
    <property type="entry name" value="Imidazole glycerol phosphate synthase subunit HisF"/>
    <property type="match status" value="1"/>
</dbReference>
<dbReference type="Gene3D" id="3.20.20.70">
    <property type="entry name" value="Aldolase class I"/>
    <property type="match status" value="1"/>
</dbReference>
<dbReference type="HAMAP" id="MF_01013">
    <property type="entry name" value="HisF"/>
    <property type="match status" value="1"/>
</dbReference>
<dbReference type="InterPro" id="IPR013785">
    <property type="entry name" value="Aldolase_TIM"/>
</dbReference>
<dbReference type="InterPro" id="IPR006062">
    <property type="entry name" value="His_biosynth"/>
</dbReference>
<dbReference type="InterPro" id="IPR004651">
    <property type="entry name" value="HisF"/>
</dbReference>
<dbReference type="InterPro" id="IPR050064">
    <property type="entry name" value="IGPS_HisA/HisF"/>
</dbReference>
<dbReference type="InterPro" id="IPR011060">
    <property type="entry name" value="RibuloseP-bd_barrel"/>
</dbReference>
<dbReference type="NCBIfam" id="TIGR00735">
    <property type="entry name" value="hisF"/>
    <property type="match status" value="1"/>
</dbReference>
<dbReference type="PANTHER" id="PTHR21235:SF2">
    <property type="entry name" value="IMIDAZOLE GLYCEROL PHOSPHATE SYNTHASE HISHF"/>
    <property type="match status" value="1"/>
</dbReference>
<dbReference type="PANTHER" id="PTHR21235">
    <property type="entry name" value="IMIDAZOLE GLYCEROL PHOSPHATE SYNTHASE SUBUNIT HISF/H IGP SYNTHASE SUBUNIT HISF/H"/>
    <property type="match status" value="1"/>
</dbReference>
<dbReference type="Pfam" id="PF00977">
    <property type="entry name" value="His_biosynth"/>
    <property type="match status" value="1"/>
</dbReference>
<dbReference type="SUPFAM" id="SSF51366">
    <property type="entry name" value="Ribulose-phoshate binding barrel"/>
    <property type="match status" value="1"/>
</dbReference>